<name>LACB2_CANLF</name>
<organism>
    <name type="scientific">Canis lupus familiaris</name>
    <name type="common">Dog</name>
    <name type="synonym">Canis familiaris</name>
    <dbReference type="NCBI Taxonomy" id="9615"/>
    <lineage>
        <taxon>Eukaryota</taxon>
        <taxon>Metazoa</taxon>
        <taxon>Chordata</taxon>
        <taxon>Craniata</taxon>
        <taxon>Vertebrata</taxon>
        <taxon>Euteleostomi</taxon>
        <taxon>Mammalia</taxon>
        <taxon>Eutheria</taxon>
        <taxon>Laurasiatheria</taxon>
        <taxon>Carnivora</taxon>
        <taxon>Caniformia</taxon>
        <taxon>Canidae</taxon>
        <taxon>Canis</taxon>
    </lineage>
</organism>
<gene>
    <name type="primary">LGB2</name>
</gene>
<keyword id="KW-0903">Direct protein sequencing</keyword>
<keyword id="KW-1015">Disulfide bond</keyword>
<keyword id="KW-0494">Milk protein</keyword>
<keyword id="KW-1185">Reference proteome</keyword>
<keyword id="KW-0683">Retinol-binding</keyword>
<keyword id="KW-0964">Secreted</keyword>
<keyword id="KW-0813">Transport</keyword>
<proteinExistence type="evidence at protein level"/>
<dbReference type="PIR" id="S33878">
    <property type="entry name" value="S33878"/>
</dbReference>
<dbReference type="FunCoup" id="P33686">
    <property type="interactions" value="2"/>
</dbReference>
<dbReference type="STRING" id="9615.ENSCAFP00000058242"/>
<dbReference type="PaxDb" id="9612-ENSCAFP00000029241"/>
<dbReference type="eggNOG" id="ENOG502T0EI">
    <property type="taxonomic scope" value="Eukaryota"/>
</dbReference>
<dbReference type="InParanoid" id="P33686"/>
<dbReference type="Proteomes" id="UP000002254">
    <property type="component" value="Unplaced"/>
</dbReference>
<dbReference type="Proteomes" id="UP000694429">
    <property type="component" value="Unplaced"/>
</dbReference>
<dbReference type="Proteomes" id="UP000694542">
    <property type="component" value="Unplaced"/>
</dbReference>
<dbReference type="Proteomes" id="UP000805418">
    <property type="component" value="Unplaced"/>
</dbReference>
<dbReference type="GO" id="GO:0005576">
    <property type="term" value="C:extracellular region"/>
    <property type="evidence" value="ECO:0007669"/>
    <property type="project" value="UniProtKB-SubCell"/>
</dbReference>
<dbReference type="GO" id="GO:0019841">
    <property type="term" value="F:retinol binding"/>
    <property type="evidence" value="ECO:0007669"/>
    <property type="project" value="UniProtKB-KW"/>
</dbReference>
<dbReference type="CDD" id="cd19416">
    <property type="entry name" value="lipocalin_beta-LG-like"/>
    <property type="match status" value="1"/>
</dbReference>
<dbReference type="Gene3D" id="2.40.128.20">
    <property type="match status" value="1"/>
</dbReference>
<dbReference type="InterPro" id="IPR002447">
    <property type="entry name" value="Blactoglobulin"/>
</dbReference>
<dbReference type="InterPro" id="IPR012674">
    <property type="entry name" value="Calycin"/>
</dbReference>
<dbReference type="InterPro" id="IPR002345">
    <property type="entry name" value="Lipocalin"/>
</dbReference>
<dbReference type="InterPro" id="IPR022272">
    <property type="entry name" value="Lipocalin_CS"/>
</dbReference>
<dbReference type="InterPro" id="IPR000566">
    <property type="entry name" value="Lipocln_cytosolic_FA-bd_dom"/>
</dbReference>
<dbReference type="PANTHER" id="PTHR11430:SF117">
    <property type="entry name" value="GLYCODELIN"/>
    <property type="match status" value="1"/>
</dbReference>
<dbReference type="PANTHER" id="PTHR11430">
    <property type="entry name" value="LIPOCALIN"/>
    <property type="match status" value="1"/>
</dbReference>
<dbReference type="Pfam" id="PF00061">
    <property type="entry name" value="Lipocalin"/>
    <property type="match status" value="1"/>
</dbReference>
<dbReference type="PRINTS" id="PR01172">
    <property type="entry name" value="BLCTOGLOBULN"/>
</dbReference>
<dbReference type="PRINTS" id="PR00179">
    <property type="entry name" value="LIPOCALIN"/>
</dbReference>
<dbReference type="SUPFAM" id="SSF50814">
    <property type="entry name" value="Lipocalins"/>
    <property type="match status" value="1"/>
</dbReference>
<dbReference type="PROSITE" id="PS00213">
    <property type="entry name" value="LIPOCALIN"/>
    <property type="match status" value="1"/>
</dbReference>
<evidence type="ECO:0000250" key="1"/>
<evidence type="ECO:0000305" key="2"/>
<feature type="chain" id="PRO_0000201014" description="Beta-lactoglobulin-2">
    <location>
        <begin position="1"/>
        <end position="161"/>
    </location>
</feature>
<feature type="disulfide bond" evidence="1">
    <location>
        <begin position="66"/>
        <end position="159"/>
    </location>
</feature>
<feature type="disulfide bond" evidence="1">
    <location>
        <begin position="106"/>
        <end position="119"/>
    </location>
</feature>
<sequence length="161" mass="18552">IVIPRTMEDLDLQKVAGTWHSMAMAASDISLLDSETAPLRVYIQELRPTPQDNLEIVLRKWEDNRCVEKKVFAEKTELAAXFSINYVEENQIFLLDTDYDNYLFFCMENANAPQQSLMCQCLARTLEVNNEVIGKFNRALKTLPVHMQLLNPTQVEEQCLV</sequence>
<protein>
    <recommendedName>
        <fullName>Beta-lactoglobulin-2</fullName>
        <shortName>Beta-LG-2</shortName>
    </recommendedName>
    <alternativeName>
        <fullName>Beta-lactoglobulin II</fullName>
    </alternativeName>
</protein>
<comment type="function">
    <text>Primary component of whey, it binds retinol and is probably involved in the transport of that molecule.</text>
</comment>
<comment type="subunit">
    <text>Monomer.</text>
</comment>
<comment type="subcellular location">
    <subcellularLocation>
        <location>Secreted</location>
    </subcellularLocation>
</comment>
<comment type="tissue specificity">
    <text>Synthesized in mammary gland and secreted in milk.</text>
</comment>
<comment type="similarity">
    <text evidence="2">Belongs to the calycin superfamily. Lipocalin family.</text>
</comment>
<reference key="1">
    <citation type="journal article" date="1993" name="Protein Seq. Data Anal.">
        <title>Feline beta-lactoglobulins I, II and III, and canine beta-lactoglobulins I and II: amino acid sequences provide evidence for the existence of more than one gene for beta-lactoglobulin in the cat and dog.</title>
        <authorList>
            <person name="Halliday J.A."/>
            <person name="Bell K."/>
            <person name="McAndrew K."/>
            <person name="Shaw D.C."/>
        </authorList>
    </citation>
    <scope>PROTEIN SEQUENCE</scope>
</reference>
<accession>P33686</accession>